<evidence type="ECO:0000255" key="1"/>
<evidence type="ECO:0000269" key="2">
    <source>
    </source>
</evidence>
<evidence type="ECO:0000269" key="3">
    <source>
    </source>
</evidence>
<evidence type="ECO:0000269" key="4">
    <source>
    </source>
</evidence>
<evidence type="ECO:0000269" key="5">
    <source>
    </source>
</evidence>
<evidence type="ECO:0000303" key="6">
    <source>
    </source>
</evidence>
<evidence type="ECO:0000303" key="7">
    <source>
    </source>
</evidence>
<evidence type="ECO:0000305" key="8"/>
<evidence type="ECO:0000305" key="9">
    <source>
    </source>
</evidence>
<evidence type="ECO:0000305" key="10">
    <source>
    </source>
</evidence>
<evidence type="ECO:0007744" key="11">
    <source>
        <dbReference type="PDB" id="1IBJ"/>
    </source>
</evidence>
<evidence type="ECO:0007829" key="12">
    <source>
        <dbReference type="PDB" id="1IBJ"/>
    </source>
</evidence>
<keyword id="KW-0002">3D-structure</keyword>
<keyword id="KW-0025">Alternative splicing</keyword>
<keyword id="KW-0028">Amino-acid biosynthesis</keyword>
<keyword id="KW-0150">Chloroplast</keyword>
<keyword id="KW-0456">Lyase</keyword>
<keyword id="KW-0486">Methionine biosynthesis</keyword>
<keyword id="KW-0934">Plastid</keyword>
<keyword id="KW-0663">Pyridoxal phosphate</keyword>
<keyword id="KW-1185">Reference proteome</keyword>
<keyword id="KW-0809">Transit peptide</keyword>
<protein>
    <recommendedName>
        <fullName evidence="7">Cystathionine beta-lyase, chloroplastic</fullName>
        <shortName evidence="7">CBL</shortName>
        <ecNumber evidence="2 10">4.4.1.13</ecNumber>
    </recommendedName>
    <alternativeName>
        <fullName>Beta-cystathionase</fullName>
    </alternativeName>
    <alternativeName>
        <fullName>Cysteine lyase</fullName>
    </alternativeName>
    <alternativeName>
        <fullName>Cysteine-S-conjugate beta-lyase</fullName>
    </alternativeName>
</protein>
<gene>
    <name type="ordered locus">At3g57050</name>
    <name type="ORF">F24I3.130</name>
</gene>
<organism>
    <name type="scientific">Arabidopsis thaliana</name>
    <name type="common">Mouse-ear cress</name>
    <dbReference type="NCBI Taxonomy" id="3702"/>
    <lineage>
        <taxon>Eukaryota</taxon>
        <taxon>Viridiplantae</taxon>
        <taxon>Streptophyta</taxon>
        <taxon>Embryophyta</taxon>
        <taxon>Tracheophyta</taxon>
        <taxon>Spermatophyta</taxon>
        <taxon>Magnoliopsida</taxon>
        <taxon>eudicotyledons</taxon>
        <taxon>Gunneridae</taxon>
        <taxon>Pentapetalae</taxon>
        <taxon>rosids</taxon>
        <taxon>malvids</taxon>
        <taxon>Brassicales</taxon>
        <taxon>Brassicaceae</taxon>
        <taxon>Camelineae</taxon>
        <taxon>Arabidopsis</taxon>
    </lineage>
</organism>
<comment type="function">
    <text evidence="2 3 4 5">Catalyzes the penultimate step in the de novo biosynthesis of methionine (PubMed:11402193, PubMed:31002461, PubMed:8541513). Its role in methionine metabolism may affect plant development in different organs, probably by modifying plant auxin transport (PubMed:31002461). Its cysteine desulfhydrase activity may be involved in hydrogen sulfur production using L-cysteine as a substrate (PubMed:35472754).</text>
</comment>
<comment type="catalytic activity">
    <reaction evidence="2 10">
        <text>L,L-cystathionine + H2O = L-homocysteine + pyruvate + NH4(+)</text>
        <dbReference type="Rhea" id="RHEA:13965"/>
        <dbReference type="ChEBI" id="CHEBI:15361"/>
        <dbReference type="ChEBI" id="CHEBI:15377"/>
        <dbReference type="ChEBI" id="CHEBI:28938"/>
        <dbReference type="ChEBI" id="CHEBI:58161"/>
        <dbReference type="ChEBI" id="CHEBI:58199"/>
    </reaction>
    <physiologicalReaction direction="left-to-right" evidence="9">
        <dbReference type="Rhea" id="RHEA:13966"/>
    </physiologicalReaction>
</comment>
<comment type="catalytic activity">
    <reaction evidence="2 10">
        <text>an S-substituted L-cysteine + H2O = a thiol + pyruvate + NH4(+)</text>
        <dbReference type="Rhea" id="RHEA:18121"/>
        <dbReference type="ChEBI" id="CHEBI:15361"/>
        <dbReference type="ChEBI" id="CHEBI:15377"/>
        <dbReference type="ChEBI" id="CHEBI:28938"/>
        <dbReference type="ChEBI" id="CHEBI:29256"/>
        <dbReference type="ChEBI" id="CHEBI:58717"/>
        <dbReference type="EC" id="4.4.1.13"/>
    </reaction>
</comment>
<comment type="cofactor">
    <cofactor evidence="2">
        <name>pyridoxal 5'-phosphate</name>
        <dbReference type="ChEBI" id="CHEBI:597326"/>
    </cofactor>
</comment>
<comment type="pathway">
    <text>Amino-acid biosynthesis; L-methionine biosynthesis via de novo pathway; L-homocysteine from L-cystathionine: step 1/1.</text>
</comment>
<comment type="subunit">
    <text evidence="2">Forms homodimers (PubMed:11402193). May form homotetramers from two homodimers (PubMed:11402193).</text>
</comment>
<comment type="subcellular location">
    <subcellularLocation>
        <location evidence="3">Plastid</location>
        <location evidence="3">Chloroplast</location>
    </subcellularLocation>
</comment>
<comment type="alternative products">
    <event type="alternative splicing"/>
    <isoform>
        <id>P53780-1</id>
        <name>1</name>
        <sequence type="displayed"/>
    </isoform>
    <isoform>
        <id>P53780-2</id>
        <name>2</name>
        <sequence type="described" ref="VSP_008894"/>
    </isoform>
</comment>
<comment type="disruption phenotype">
    <text evidence="3">Decreased abundance of several PIN-FORMED (PIN) proteins, involved in plant auxin transport, and impaired auxin-responsive gene expression.</text>
</comment>
<comment type="miscellaneous">
    <molecule>Isoform 2</molecule>
    <text evidence="8">May be due to a competing donor splice site.</text>
</comment>
<comment type="similarity">
    <text evidence="8">Belongs to the trans-sulfuration enzymes family.</text>
</comment>
<accession>P53780</accession>
<accession>Q8VZL8</accession>
<sequence length="464" mass="50430">MTSSLSLHSSFVPSFADLSDRGLISKNSPTSVSISKVPTWEKKQISNRNSFKLNCVMEKSVDGQTHSTVNNTTDSLNTMNIKEEASVSTLLVNLDNKFDPFDAMSTPLYQTATFKQPSAIENGPYDYTRSGNPTRDALESLLAKLDKADRAFCFTSGMAALSAVTHLIKNGEEIVAGDDVYGGSDRLLSQVVPRSGVVVKRVNTTKLDEVAAAIGPQTKLVWLESPTNPRQQISDIRKISEMAHAQGALVLVDNSIMSPVLSRPLELGADIVMHSATKFIAGHSDVMAGVLAVKGEKLAKEVYFLQNSEGSGLAPFDCWLCLRGIKTMALRIEKQQENARKIAMYLSSHPRVKKVYYAGLPDHPGHHLHFSQAKGAGSVFSFITGSVALSKHLVETTKYFSIAVSFGSVKSLISMPCFMSHASIPAEVREARGLTEDLVRISAGIEDVDDLISDLDIAFKTFPL</sequence>
<dbReference type="EC" id="4.4.1.13" evidence="2 10"/>
<dbReference type="EMBL" id="L40511">
    <property type="protein sequence ID" value="AAA99176.1"/>
    <property type="molecule type" value="mRNA"/>
</dbReference>
<dbReference type="EMBL" id="AL138655">
    <property type="protein sequence ID" value="CAB72175.1"/>
    <property type="molecule type" value="Genomic_DNA"/>
</dbReference>
<dbReference type="EMBL" id="CP002686">
    <property type="protein sequence ID" value="AEE79603.1"/>
    <property type="molecule type" value="Genomic_DNA"/>
</dbReference>
<dbReference type="EMBL" id="CP002686">
    <property type="protein sequence ID" value="AEE79605.1"/>
    <property type="molecule type" value="Genomic_DNA"/>
</dbReference>
<dbReference type="EMBL" id="AY064018">
    <property type="protein sequence ID" value="AAL36374.1"/>
    <property type="molecule type" value="mRNA"/>
</dbReference>
<dbReference type="EMBL" id="AY114051">
    <property type="protein sequence ID" value="AAM45099.1"/>
    <property type="molecule type" value="mRNA"/>
</dbReference>
<dbReference type="PIR" id="S61429">
    <property type="entry name" value="S61429"/>
</dbReference>
<dbReference type="RefSeq" id="NP_191264.1">
    <molecule id="P53780-1"/>
    <property type="nucleotide sequence ID" value="NM_115564.4"/>
</dbReference>
<dbReference type="RefSeq" id="NP_850712.1">
    <molecule id="P53780-2"/>
    <property type="nucleotide sequence ID" value="NM_180381.3"/>
</dbReference>
<dbReference type="PDB" id="1IBJ">
    <property type="method" value="X-ray"/>
    <property type="resolution" value="2.30 A"/>
    <property type="chains" value="A/C=1-464"/>
</dbReference>
<dbReference type="PDBsum" id="1IBJ"/>
<dbReference type="SMR" id="P53780"/>
<dbReference type="BioGRID" id="10188">
    <property type="interactions" value="3"/>
</dbReference>
<dbReference type="FunCoup" id="P53780">
    <property type="interactions" value="1786"/>
</dbReference>
<dbReference type="IntAct" id="P53780">
    <property type="interactions" value="2"/>
</dbReference>
<dbReference type="STRING" id="3702.P53780"/>
<dbReference type="MetOSite" id="P53780"/>
<dbReference type="PaxDb" id="3702-AT3G57050.1"/>
<dbReference type="EnsemblPlants" id="AT3G57050.1">
    <molecule id="P53780-1"/>
    <property type="protein sequence ID" value="AT3G57050.1"/>
    <property type="gene ID" value="AT3G57050"/>
</dbReference>
<dbReference type="EnsemblPlants" id="AT3G57050.2">
    <molecule id="P53780-2"/>
    <property type="protein sequence ID" value="AT3G57050.2"/>
    <property type="gene ID" value="AT3G57050"/>
</dbReference>
<dbReference type="Gramene" id="AT3G57050.1">
    <molecule id="P53780-1"/>
    <property type="protein sequence ID" value="AT3G57050.1"/>
    <property type="gene ID" value="AT3G57050"/>
</dbReference>
<dbReference type="Gramene" id="AT3G57050.2">
    <molecule id="P53780-2"/>
    <property type="protein sequence ID" value="AT3G57050.2"/>
    <property type="gene ID" value="AT3G57050"/>
</dbReference>
<dbReference type="KEGG" id="ath:AT3G57050"/>
<dbReference type="Araport" id="AT3G57050"/>
<dbReference type="TAIR" id="AT3G57050">
    <property type="gene designation" value="CBL"/>
</dbReference>
<dbReference type="eggNOG" id="KOG0053">
    <property type="taxonomic scope" value="Eukaryota"/>
</dbReference>
<dbReference type="InParanoid" id="P53780"/>
<dbReference type="OrthoDB" id="3512640at2759"/>
<dbReference type="PhylomeDB" id="P53780"/>
<dbReference type="BioCyc" id="ARA:AT3G57050-MONOMER"/>
<dbReference type="BioCyc" id="MetaCyc:AT3G57050-MONOMER"/>
<dbReference type="BRENDA" id="4.4.1.13">
    <property type="organism ID" value="399"/>
</dbReference>
<dbReference type="SABIO-RK" id="P53780"/>
<dbReference type="UniPathway" id="UPA00051">
    <property type="reaction ID" value="UER00078"/>
</dbReference>
<dbReference type="EvolutionaryTrace" id="P53780"/>
<dbReference type="PRO" id="PR:P53780"/>
<dbReference type="Proteomes" id="UP000006548">
    <property type="component" value="Chromosome 3"/>
</dbReference>
<dbReference type="ExpressionAtlas" id="P53780">
    <property type="expression patterns" value="baseline and differential"/>
</dbReference>
<dbReference type="GO" id="GO:0009507">
    <property type="term" value="C:chloroplast"/>
    <property type="evidence" value="ECO:0000314"/>
    <property type="project" value="UniProtKB"/>
</dbReference>
<dbReference type="GO" id="GO:0009570">
    <property type="term" value="C:chloroplast stroma"/>
    <property type="evidence" value="ECO:0007005"/>
    <property type="project" value="TAIR"/>
</dbReference>
<dbReference type="GO" id="GO:0047804">
    <property type="term" value="F:cysteine-S-conjugate beta-lyase activity"/>
    <property type="evidence" value="ECO:0000314"/>
    <property type="project" value="UniProtKB"/>
</dbReference>
<dbReference type="GO" id="GO:0060090">
    <property type="term" value="F:molecular adaptor activity"/>
    <property type="evidence" value="ECO:0000269"/>
    <property type="project" value="DisProt"/>
</dbReference>
<dbReference type="GO" id="GO:0042803">
    <property type="term" value="F:protein homodimerization activity"/>
    <property type="evidence" value="ECO:0000314"/>
    <property type="project" value="UniProtKB"/>
</dbReference>
<dbReference type="GO" id="GO:0030170">
    <property type="term" value="F:pyridoxal phosphate binding"/>
    <property type="evidence" value="ECO:0000314"/>
    <property type="project" value="UniProtKB"/>
</dbReference>
<dbReference type="GO" id="GO:0019279">
    <property type="term" value="P:L-methionine biosynthetic process from L-homoserine via cystathionine"/>
    <property type="evidence" value="ECO:0000304"/>
    <property type="project" value="TAIR"/>
</dbReference>
<dbReference type="GO" id="GO:0006555">
    <property type="term" value="P:methionine metabolic process"/>
    <property type="evidence" value="ECO:0000314"/>
    <property type="project" value="UniProtKB"/>
</dbReference>
<dbReference type="GO" id="GO:0019346">
    <property type="term" value="P:transsulfuration"/>
    <property type="evidence" value="ECO:0007669"/>
    <property type="project" value="InterPro"/>
</dbReference>
<dbReference type="CDD" id="cd00614">
    <property type="entry name" value="CGS_like"/>
    <property type="match status" value="1"/>
</dbReference>
<dbReference type="DisProt" id="DP02642"/>
<dbReference type="FunFam" id="3.90.1150.10:FF:000013">
    <property type="entry name" value="Cystathionine beta-lyase"/>
    <property type="match status" value="1"/>
</dbReference>
<dbReference type="FunFam" id="3.40.640.10:FF:000009">
    <property type="entry name" value="Cystathionine gamma-synthase homolog"/>
    <property type="match status" value="1"/>
</dbReference>
<dbReference type="Gene3D" id="3.90.1150.10">
    <property type="entry name" value="Aspartate Aminotransferase, domain 1"/>
    <property type="match status" value="1"/>
</dbReference>
<dbReference type="Gene3D" id="3.40.640.10">
    <property type="entry name" value="Type I PLP-dependent aspartate aminotransferase-like (Major domain)"/>
    <property type="match status" value="1"/>
</dbReference>
<dbReference type="InterPro" id="IPR000277">
    <property type="entry name" value="Cys/Met-Metab_PyrdxlP-dep_enz"/>
</dbReference>
<dbReference type="InterPro" id="IPR006238">
    <property type="entry name" value="Cys_b_lyase_euk"/>
</dbReference>
<dbReference type="InterPro" id="IPR054542">
    <property type="entry name" value="Cys_met_metab_PP"/>
</dbReference>
<dbReference type="InterPro" id="IPR015424">
    <property type="entry name" value="PyrdxlP-dep_Trfase"/>
</dbReference>
<dbReference type="InterPro" id="IPR015421">
    <property type="entry name" value="PyrdxlP-dep_Trfase_major"/>
</dbReference>
<dbReference type="InterPro" id="IPR015422">
    <property type="entry name" value="PyrdxlP-dep_Trfase_small"/>
</dbReference>
<dbReference type="NCBIfam" id="TIGR01329">
    <property type="entry name" value="cysta_beta_ly_E"/>
    <property type="match status" value="1"/>
</dbReference>
<dbReference type="PANTHER" id="PTHR11808:SF50">
    <property type="entry name" value="CYSTATHIONINE BETA-LYASE"/>
    <property type="match status" value="1"/>
</dbReference>
<dbReference type="PANTHER" id="PTHR11808">
    <property type="entry name" value="TRANS-SULFURATION ENZYME FAMILY MEMBER"/>
    <property type="match status" value="1"/>
</dbReference>
<dbReference type="Pfam" id="PF01053">
    <property type="entry name" value="Cys_Met_Meta_PP"/>
    <property type="match status" value="1"/>
</dbReference>
<dbReference type="PIRSF" id="PIRSF001434">
    <property type="entry name" value="CGS"/>
    <property type="match status" value="1"/>
</dbReference>
<dbReference type="SUPFAM" id="SSF53383">
    <property type="entry name" value="PLP-dependent transferases"/>
    <property type="match status" value="1"/>
</dbReference>
<dbReference type="PROSITE" id="PS00868">
    <property type="entry name" value="CYS_MET_METAB_PP"/>
    <property type="match status" value="1"/>
</dbReference>
<feature type="transit peptide" description="Chloroplast" evidence="1">
    <location>
        <begin position="1"/>
        <end position="55"/>
    </location>
</feature>
<feature type="chain" id="PRO_0000033454" description="Cystathionine beta-lyase, chloroplastic">
    <location>
        <begin position="56"/>
        <end position="464"/>
    </location>
</feature>
<feature type="binding site" evidence="2 11">
    <location>
        <position position="127"/>
    </location>
    <ligand>
        <name>pyridoxal 5'-phosphate</name>
        <dbReference type="ChEBI" id="CHEBI:597326"/>
    </ligand>
</feature>
<feature type="binding site" evidence="2 11">
    <location>
        <position position="129"/>
    </location>
    <ligand>
        <name>pyridoxal 5'-phosphate</name>
        <dbReference type="ChEBI" id="CHEBI:597326"/>
    </ligand>
</feature>
<feature type="binding site" evidence="2 11">
    <location>
        <position position="157"/>
    </location>
    <ligand>
        <name>pyridoxal 5'-phosphate</name>
        <dbReference type="ChEBI" id="CHEBI:597326"/>
    </ligand>
</feature>
<feature type="binding site" evidence="2 11">
    <location>
        <position position="158"/>
    </location>
    <ligand>
        <name>pyridoxal 5'-phosphate</name>
        <dbReference type="ChEBI" id="CHEBI:597326"/>
    </ligand>
</feature>
<feature type="binding site" evidence="2 11">
    <location>
        <position position="275"/>
    </location>
    <ligand>
        <name>pyridoxal 5'-phosphate</name>
        <dbReference type="ChEBI" id="CHEBI:597326"/>
    </ligand>
</feature>
<feature type="binding site" evidence="2 11">
    <location>
        <position position="277"/>
    </location>
    <ligand>
        <name>pyridoxal 5'-phosphate</name>
        <dbReference type="ChEBI" id="CHEBI:597326"/>
    </ligand>
</feature>
<feature type="modified residue" description="N6-(pyridoxal phosphate)lysine" evidence="2 11">
    <location>
        <position position="278"/>
    </location>
</feature>
<feature type="splice variant" id="VSP_008894" description="In isoform 2." evidence="6">
    <original>GQTHSTVNNTTDSLNT</original>
    <variation>A</variation>
    <location>
        <begin position="63"/>
        <end position="78"/>
    </location>
</feature>
<feature type="helix" evidence="12">
    <location>
        <begin position="87"/>
        <end position="91"/>
    </location>
</feature>
<feature type="strand" evidence="12">
    <location>
        <begin position="117"/>
        <end position="120"/>
    </location>
</feature>
<feature type="turn" evidence="12">
    <location>
        <begin position="128"/>
        <end position="130"/>
    </location>
</feature>
<feature type="helix" evidence="12">
    <location>
        <begin position="133"/>
        <end position="146"/>
    </location>
</feature>
<feature type="strand" evidence="12">
    <location>
        <begin position="149"/>
        <end position="156"/>
    </location>
</feature>
<feature type="helix" evidence="12">
    <location>
        <begin position="157"/>
        <end position="165"/>
    </location>
</feature>
<feature type="strand" evidence="12">
    <location>
        <begin position="173"/>
        <end position="179"/>
    </location>
</feature>
<feature type="helix" evidence="12">
    <location>
        <begin position="182"/>
        <end position="190"/>
    </location>
</feature>
<feature type="helix" evidence="12">
    <location>
        <begin position="193"/>
        <end position="195"/>
    </location>
</feature>
<feature type="strand" evidence="12">
    <location>
        <begin position="198"/>
        <end position="202"/>
    </location>
</feature>
<feature type="helix" evidence="12">
    <location>
        <begin position="207"/>
        <end position="213"/>
    </location>
</feature>
<feature type="strand" evidence="12">
    <location>
        <begin position="216"/>
        <end position="223"/>
    </location>
</feature>
<feature type="turn" evidence="12">
    <location>
        <begin position="228"/>
        <end position="230"/>
    </location>
</feature>
<feature type="helix" evidence="12">
    <location>
        <begin position="236"/>
        <end position="244"/>
    </location>
</feature>
<feature type="turn" evidence="12">
    <location>
        <begin position="245"/>
        <end position="247"/>
    </location>
</feature>
<feature type="strand" evidence="12">
    <location>
        <begin position="249"/>
        <end position="253"/>
    </location>
</feature>
<feature type="turn" evidence="12">
    <location>
        <begin position="255"/>
        <end position="257"/>
    </location>
</feature>
<feature type="turn" evidence="12">
    <location>
        <begin position="259"/>
        <end position="261"/>
    </location>
</feature>
<feature type="helix" evidence="12">
    <location>
        <begin position="264"/>
        <end position="266"/>
    </location>
</feature>
<feature type="strand" evidence="12">
    <location>
        <begin position="270"/>
        <end position="275"/>
    </location>
</feature>
<feature type="turn" evidence="12">
    <location>
        <begin position="276"/>
        <end position="281"/>
    </location>
</feature>
<feature type="strand" evidence="12">
    <location>
        <begin position="289"/>
        <end position="293"/>
    </location>
</feature>
<feature type="helix" evidence="12">
    <location>
        <begin position="296"/>
        <end position="308"/>
    </location>
</feature>
<feature type="helix" evidence="12">
    <location>
        <begin position="315"/>
        <end position="325"/>
    </location>
</feature>
<feature type="helix" evidence="12">
    <location>
        <begin position="328"/>
        <end position="347"/>
    </location>
</feature>
<feature type="strand" evidence="12">
    <location>
        <begin position="354"/>
        <end position="356"/>
    </location>
</feature>
<feature type="helix" evidence="12">
    <location>
        <begin position="366"/>
        <end position="369"/>
    </location>
</feature>
<feature type="turn" evidence="12">
    <location>
        <begin position="370"/>
        <end position="372"/>
    </location>
</feature>
<feature type="strand" evidence="12">
    <location>
        <begin position="378"/>
        <end position="383"/>
    </location>
</feature>
<feature type="helix" evidence="12">
    <location>
        <begin position="387"/>
        <end position="396"/>
    </location>
</feature>
<feature type="strand" evidence="12">
    <location>
        <begin position="398"/>
        <end position="402"/>
    </location>
</feature>
<feature type="strand" evidence="12">
    <location>
        <begin position="408"/>
        <end position="410"/>
    </location>
</feature>
<feature type="strand" evidence="12">
    <location>
        <begin position="412"/>
        <end position="414"/>
    </location>
</feature>
<feature type="turn" evidence="12">
    <location>
        <begin position="416"/>
        <end position="421"/>
    </location>
</feature>
<feature type="strand" evidence="12">
    <location>
        <begin position="426"/>
        <end position="433"/>
    </location>
</feature>
<feature type="strand" evidence="12">
    <location>
        <begin position="439"/>
        <end position="442"/>
    </location>
</feature>
<feature type="helix" evidence="12">
    <location>
        <begin position="448"/>
        <end position="460"/>
    </location>
</feature>
<reference key="1">
    <citation type="journal article" date="1995" name="Plant Mol. Biol.">
        <title>Cloning of an Arabidopsis thaliana cDNA encoding cystathionine beta-lyase by functional complementation in Escherichia coli.</title>
        <authorList>
            <person name="Ravanel S."/>
            <person name="Ruffet M.L."/>
            <person name="Douce R."/>
        </authorList>
    </citation>
    <scope>NUCLEOTIDE SEQUENCE [MRNA] (ISOFORM 1)</scope>
    <scope>FUNCTION</scope>
    <scope>CATALYTIC ACTIVITY</scope>
    <source>
        <strain>cv. Columbia</strain>
    </source>
</reference>
<reference key="2">
    <citation type="journal article" date="2000" name="Nature">
        <title>Sequence and analysis of chromosome 3 of the plant Arabidopsis thaliana.</title>
        <authorList>
            <person name="Salanoubat M."/>
            <person name="Lemcke K."/>
            <person name="Rieger M."/>
            <person name="Ansorge W."/>
            <person name="Unseld M."/>
            <person name="Fartmann B."/>
            <person name="Valle G."/>
            <person name="Bloecker H."/>
            <person name="Perez-Alonso M."/>
            <person name="Obermaier B."/>
            <person name="Delseny M."/>
            <person name="Boutry M."/>
            <person name="Grivell L.A."/>
            <person name="Mache R."/>
            <person name="Puigdomenech P."/>
            <person name="De Simone V."/>
            <person name="Choisne N."/>
            <person name="Artiguenave F."/>
            <person name="Robert C."/>
            <person name="Brottier P."/>
            <person name="Wincker P."/>
            <person name="Cattolico L."/>
            <person name="Weissenbach J."/>
            <person name="Saurin W."/>
            <person name="Quetier F."/>
            <person name="Schaefer M."/>
            <person name="Mueller-Auer S."/>
            <person name="Gabel C."/>
            <person name="Fuchs M."/>
            <person name="Benes V."/>
            <person name="Wurmbach E."/>
            <person name="Drzonek H."/>
            <person name="Erfle H."/>
            <person name="Jordan N."/>
            <person name="Bangert S."/>
            <person name="Wiedelmann R."/>
            <person name="Kranz H."/>
            <person name="Voss H."/>
            <person name="Holland R."/>
            <person name="Brandt P."/>
            <person name="Nyakatura G."/>
            <person name="Vezzi A."/>
            <person name="D'Angelo M."/>
            <person name="Pallavicini A."/>
            <person name="Toppo S."/>
            <person name="Simionati B."/>
            <person name="Conrad A."/>
            <person name="Hornischer K."/>
            <person name="Kauer G."/>
            <person name="Loehnert T.-H."/>
            <person name="Nordsiek G."/>
            <person name="Reichelt J."/>
            <person name="Scharfe M."/>
            <person name="Schoen O."/>
            <person name="Bargues M."/>
            <person name="Terol J."/>
            <person name="Climent J."/>
            <person name="Navarro P."/>
            <person name="Collado C."/>
            <person name="Perez-Perez A."/>
            <person name="Ottenwaelder B."/>
            <person name="Duchemin D."/>
            <person name="Cooke R."/>
            <person name="Laudie M."/>
            <person name="Berger-Llauro C."/>
            <person name="Purnelle B."/>
            <person name="Masuy D."/>
            <person name="de Haan M."/>
            <person name="Maarse A.C."/>
            <person name="Alcaraz J.-P."/>
            <person name="Cottet A."/>
            <person name="Casacuberta E."/>
            <person name="Monfort A."/>
            <person name="Argiriou A."/>
            <person name="Flores M."/>
            <person name="Liguori R."/>
            <person name="Vitale D."/>
            <person name="Mannhaupt G."/>
            <person name="Haase D."/>
            <person name="Schoof H."/>
            <person name="Rudd S."/>
            <person name="Zaccaria P."/>
            <person name="Mewes H.-W."/>
            <person name="Mayer K.F.X."/>
            <person name="Kaul S."/>
            <person name="Town C.D."/>
            <person name="Koo H.L."/>
            <person name="Tallon L.J."/>
            <person name="Jenkins J."/>
            <person name="Rooney T."/>
            <person name="Rizzo M."/>
            <person name="Walts A."/>
            <person name="Utterback T."/>
            <person name="Fujii C.Y."/>
            <person name="Shea T.P."/>
            <person name="Creasy T.H."/>
            <person name="Haas B."/>
            <person name="Maiti R."/>
            <person name="Wu D."/>
            <person name="Peterson J."/>
            <person name="Van Aken S."/>
            <person name="Pai G."/>
            <person name="Militscher J."/>
            <person name="Sellers P."/>
            <person name="Gill J.E."/>
            <person name="Feldblyum T.V."/>
            <person name="Preuss D."/>
            <person name="Lin X."/>
            <person name="Nierman W.C."/>
            <person name="Salzberg S.L."/>
            <person name="White O."/>
            <person name="Venter J.C."/>
            <person name="Fraser C.M."/>
            <person name="Kaneko T."/>
            <person name="Nakamura Y."/>
            <person name="Sato S."/>
            <person name="Kato T."/>
            <person name="Asamizu E."/>
            <person name="Sasamoto S."/>
            <person name="Kimura T."/>
            <person name="Idesawa K."/>
            <person name="Kawashima K."/>
            <person name="Kishida Y."/>
            <person name="Kiyokawa C."/>
            <person name="Kohara M."/>
            <person name="Matsumoto M."/>
            <person name="Matsuno A."/>
            <person name="Muraki A."/>
            <person name="Nakayama S."/>
            <person name="Nakazaki N."/>
            <person name="Shinpo S."/>
            <person name="Takeuchi C."/>
            <person name="Wada T."/>
            <person name="Watanabe A."/>
            <person name="Yamada M."/>
            <person name="Yasuda M."/>
            <person name="Tabata S."/>
        </authorList>
    </citation>
    <scope>NUCLEOTIDE SEQUENCE [LARGE SCALE GENOMIC DNA]</scope>
    <source>
        <strain>cv. Columbia</strain>
    </source>
</reference>
<reference key="3">
    <citation type="journal article" date="2017" name="Plant J.">
        <title>Araport11: a complete reannotation of the Arabidopsis thaliana reference genome.</title>
        <authorList>
            <person name="Cheng C.Y."/>
            <person name="Krishnakumar V."/>
            <person name="Chan A.P."/>
            <person name="Thibaud-Nissen F."/>
            <person name="Schobel S."/>
            <person name="Town C.D."/>
        </authorList>
    </citation>
    <scope>GENOME REANNOTATION</scope>
    <source>
        <strain>cv. Columbia</strain>
    </source>
</reference>
<reference key="4">
    <citation type="journal article" date="2003" name="Science">
        <title>Empirical analysis of transcriptional activity in the Arabidopsis genome.</title>
        <authorList>
            <person name="Yamada K."/>
            <person name="Lim J."/>
            <person name="Dale J.M."/>
            <person name="Chen H."/>
            <person name="Shinn P."/>
            <person name="Palm C.J."/>
            <person name="Southwick A.M."/>
            <person name="Wu H.C."/>
            <person name="Kim C.J."/>
            <person name="Nguyen M."/>
            <person name="Pham P.K."/>
            <person name="Cheuk R.F."/>
            <person name="Karlin-Newmann G."/>
            <person name="Liu S.X."/>
            <person name="Lam B."/>
            <person name="Sakano H."/>
            <person name="Wu T."/>
            <person name="Yu G."/>
            <person name="Miranda M."/>
            <person name="Quach H.L."/>
            <person name="Tripp M."/>
            <person name="Chang C.H."/>
            <person name="Lee J.M."/>
            <person name="Toriumi M.J."/>
            <person name="Chan M.M."/>
            <person name="Tang C.C."/>
            <person name="Onodera C.S."/>
            <person name="Deng J.M."/>
            <person name="Akiyama K."/>
            <person name="Ansari Y."/>
            <person name="Arakawa T."/>
            <person name="Banh J."/>
            <person name="Banno F."/>
            <person name="Bowser L."/>
            <person name="Brooks S.Y."/>
            <person name="Carninci P."/>
            <person name="Chao Q."/>
            <person name="Choy N."/>
            <person name="Enju A."/>
            <person name="Goldsmith A.D."/>
            <person name="Gurjal M."/>
            <person name="Hansen N.F."/>
            <person name="Hayashizaki Y."/>
            <person name="Johnson-Hopson C."/>
            <person name="Hsuan V.W."/>
            <person name="Iida K."/>
            <person name="Karnes M."/>
            <person name="Khan S."/>
            <person name="Koesema E."/>
            <person name="Ishida J."/>
            <person name="Jiang P.X."/>
            <person name="Jones T."/>
            <person name="Kawai J."/>
            <person name="Kamiya A."/>
            <person name="Meyers C."/>
            <person name="Nakajima M."/>
            <person name="Narusaka M."/>
            <person name="Seki M."/>
            <person name="Sakurai T."/>
            <person name="Satou M."/>
            <person name="Tamse R."/>
            <person name="Vaysberg M."/>
            <person name="Wallender E.K."/>
            <person name="Wong C."/>
            <person name="Yamamura Y."/>
            <person name="Yuan S."/>
            <person name="Shinozaki K."/>
            <person name="Davis R.W."/>
            <person name="Theologis A."/>
            <person name="Ecker J.R."/>
        </authorList>
    </citation>
    <scope>NUCLEOTIDE SEQUENCE [LARGE SCALE MRNA] (ISOFORM 2)</scope>
    <source>
        <strain>cv. Columbia</strain>
    </source>
</reference>
<reference key="5">
    <citation type="journal article" date="2001" name="Plant Physiol.">
        <title>The three-dimensional structure of cystathionine beta-lyase from Arabidopsis and its substrate specificity.</title>
        <authorList>
            <person name="Breitinger U."/>
            <person name="Clausen T."/>
            <person name="Ehlert S."/>
            <person name="Huber R."/>
            <person name="Laber B."/>
            <person name="Schmidt F."/>
            <person name="Pohl E."/>
            <person name="Messerschmidt A."/>
        </authorList>
    </citation>
    <scope>X-RAY CRYSTALLOGRAPHY (2.30 ANGSTROMS) OF 1-464</scope>
    <scope>FUNCTION</scope>
    <scope>CATALYTIC ACTIVITY</scope>
    <scope>COFACTOR</scope>
    <scope>SUBUNIT</scope>
    <scope>PYRIDOXAL PHOSPHATE AT LYS-278</scope>
</reference>
<reference key="6">
    <citation type="journal article" date="2019" name="Plant J.">
        <title>Cystathionine beta-lyase is crucial for embryo patterning and the maintenance of root stem cell niche in Arabidopsis.</title>
        <authorList>
            <person name="Liu G."/>
            <person name="Yang W."/>
            <person name="Zhang X."/>
            <person name="Peng T."/>
            <person name="Zou Y."/>
            <person name="Zhang T."/>
            <person name="Wang H."/>
            <person name="Liu X."/>
            <person name="Tao L.Z."/>
        </authorList>
    </citation>
    <scope>FUNCTION</scope>
    <scope>SUBCELLULAR LOCATION</scope>
    <scope>DISRUPTION PHENOTYPE</scope>
</reference>
<reference key="7">
    <citation type="journal article" date="2022" name="Plant Physiol. Biochem.">
        <title>Identification and functional characterization of a cystathionine beta-lyase (CBL) enzyme for H2S production in Arabidopsis thaliana.</title>
        <authorList>
            <person name="Wang Z."/>
            <person name="He F."/>
            <person name="Mu Y."/>
            <person name="Zhang L."/>
            <person name="Liu Z."/>
            <person name="Liu D."/>
            <person name="Yang J."/>
            <person name="Jin Z."/>
            <person name="Pei Y."/>
        </authorList>
    </citation>
    <scope>FUNCTION</scope>
</reference>
<name>METC_ARATH</name>
<proteinExistence type="evidence at protein level"/>